<keyword id="KW-0963">Cytoplasm</keyword>
<keyword id="KW-0460">Magnesium</keyword>
<keyword id="KW-0479">Metal-binding</keyword>
<keyword id="KW-0566">Pantothenate biosynthesis</keyword>
<keyword id="KW-1185">Reference proteome</keyword>
<keyword id="KW-0808">Transferase</keyword>
<accession>Q3SH83</accession>
<sequence length="262" mass="26878">MPVTLSTLKALRQKGEKIAVLTCYDASFARVFDAAGVDVLLVGDSLGMVIQGHASTLPVKLAEMAYHTRCVAAGTTRAFIVADLPFGSYQPSPERAYTAAARLMAAGAHMIKLEGGAVMVDTVAFLAARGIPVCAHLGLLPQSVNQLGGYRVQGREDGDAAQLVADARALEAAGAGLIVLEMVPAALAKTVTAALSMPTIGIGAGADCAGQVLVSYDMLGLYPRAPKFSKNFLAGAGSVDAAVRAYVAAVKDGSFPAAEHAF</sequence>
<gene>
    <name evidence="1" type="primary">panB</name>
    <name type="ordered locus">Tbd_2053</name>
</gene>
<reference key="1">
    <citation type="journal article" date="2006" name="J. Bacteriol.">
        <title>The genome sequence of the obligately chemolithoautotrophic, facultatively anaerobic bacterium Thiobacillus denitrificans.</title>
        <authorList>
            <person name="Beller H.R."/>
            <person name="Chain P.S."/>
            <person name="Letain T.E."/>
            <person name="Chakicherla A."/>
            <person name="Larimer F.W."/>
            <person name="Richardson P.M."/>
            <person name="Coleman M.A."/>
            <person name="Wood A.P."/>
            <person name="Kelly D.P."/>
        </authorList>
    </citation>
    <scope>NUCLEOTIDE SEQUENCE [LARGE SCALE GENOMIC DNA]</scope>
    <source>
        <strain>ATCC 25259 / T1</strain>
    </source>
</reference>
<proteinExistence type="inferred from homology"/>
<feature type="chain" id="PRO_0000297400" description="3-methyl-2-oxobutanoate hydroxymethyltransferase">
    <location>
        <begin position="1"/>
        <end position="262"/>
    </location>
</feature>
<feature type="active site" description="Proton acceptor" evidence="1">
    <location>
        <position position="181"/>
    </location>
</feature>
<feature type="binding site" evidence="1">
    <location>
        <begin position="44"/>
        <end position="45"/>
    </location>
    <ligand>
        <name>3-methyl-2-oxobutanoate</name>
        <dbReference type="ChEBI" id="CHEBI:11851"/>
    </ligand>
</feature>
<feature type="binding site" evidence="1">
    <location>
        <position position="44"/>
    </location>
    <ligand>
        <name>Mg(2+)</name>
        <dbReference type="ChEBI" id="CHEBI:18420"/>
    </ligand>
</feature>
<feature type="binding site" evidence="1">
    <location>
        <position position="83"/>
    </location>
    <ligand>
        <name>3-methyl-2-oxobutanoate</name>
        <dbReference type="ChEBI" id="CHEBI:11851"/>
    </ligand>
</feature>
<feature type="binding site" evidence="1">
    <location>
        <position position="83"/>
    </location>
    <ligand>
        <name>Mg(2+)</name>
        <dbReference type="ChEBI" id="CHEBI:18420"/>
    </ligand>
</feature>
<feature type="binding site" evidence="1">
    <location>
        <position position="112"/>
    </location>
    <ligand>
        <name>3-methyl-2-oxobutanoate</name>
        <dbReference type="ChEBI" id="CHEBI:11851"/>
    </ligand>
</feature>
<feature type="binding site" evidence="1">
    <location>
        <position position="114"/>
    </location>
    <ligand>
        <name>Mg(2+)</name>
        <dbReference type="ChEBI" id="CHEBI:18420"/>
    </ligand>
</feature>
<comment type="function">
    <text evidence="1">Catalyzes the reversible reaction in which hydroxymethyl group from 5,10-methylenetetrahydrofolate is transferred onto alpha-ketoisovalerate to form ketopantoate.</text>
</comment>
<comment type="catalytic activity">
    <reaction evidence="1">
        <text>3-methyl-2-oxobutanoate + (6R)-5,10-methylene-5,6,7,8-tetrahydrofolate + H2O = 2-dehydropantoate + (6S)-5,6,7,8-tetrahydrofolate</text>
        <dbReference type="Rhea" id="RHEA:11824"/>
        <dbReference type="ChEBI" id="CHEBI:11561"/>
        <dbReference type="ChEBI" id="CHEBI:11851"/>
        <dbReference type="ChEBI" id="CHEBI:15377"/>
        <dbReference type="ChEBI" id="CHEBI:15636"/>
        <dbReference type="ChEBI" id="CHEBI:57453"/>
        <dbReference type="EC" id="2.1.2.11"/>
    </reaction>
</comment>
<comment type="cofactor">
    <cofactor evidence="1">
        <name>Mg(2+)</name>
        <dbReference type="ChEBI" id="CHEBI:18420"/>
    </cofactor>
    <text evidence="1">Binds 1 Mg(2+) ion per subunit.</text>
</comment>
<comment type="pathway">
    <text evidence="1">Cofactor biosynthesis; (R)-pantothenate biosynthesis; (R)-pantoate from 3-methyl-2-oxobutanoate: step 1/2.</text>
</comment>
<comment type="subunit">
    <text evidence="1">Homodecamer; pentamer of dimers.</text>
</comment>
<comment type="subcellular location">
    <subcellularLocation>
        <location evidence="1">Cytoplasm</location>
    </subcellularLocation>
</comment>
<comment type="similarity">
    <text evidence="1">Belongs to the PanB family.</text>
</comment>
<name>PANB_THIDA</name>
<organism>
    <name type="scientific">Thiobacillus denitrificans (strain ATCC 25259 / T1)</name>
    <dbReference type="NCBI Taxonomy" id="292415"/>
    <lineage>
        <taxon>Bacteria</taxon>
        <taxon>Pseudomonadati</taxon>
        <taxon>Pseudomonadota</taxon>
        <taxon>Betaproteobacteria</taxon>
        <taxon>Nitrosomonadales</taxon>
        <taxon>Thiobacillaceae</taxon>
        <taxon>Thiobacillus</taxon>
    </lineage>
</organism>
<protein>
    <recommendedName>
        <fullName evidence="1">3-methyl-2-oxobutanoate hydroxymethyltransferase</fullName>
        <ecNumber evidence="1">2.1.2.11</ecNumber>
    </recommendedName>
    <alternativeName>
        <fullName evidence="1">Ketopantoate hydroxymethyltransferase</fullName>
        <shortName evidence="1">KPHMT</shortName>
    </alternativeName>
</protein>
<dbReference type="EC" id="2.1.2.11" evidence="1"/>
<dbReference type="EMBL" id="CP000116">
    <property type="protein sequence ID" value="AAZ98006.1"/>
    <property type="molecule type" value="Genomic_DNA"/>
</dbReference>
<dbReference type="RefSeq" id="WP_011312565.1">
    <property type="nucleotide sequence ID" value="NC_007404.1"/>
</dbReference>
<dbReference type="SMR" id="Q3SH83"/>
<dbReference type="STRING" id="292415.Tbd_2053"/>
<dbReference type="KEGG" id="tbd:Tbd_2053"/>
<dbReference type="eggNOG" id="COG0413">
    <property type="taxonomic scope" value="Bacteria"/>
</dbReference>
<dbReference type="HOGENOM" id="CLU_036645_1_0_4"/>
<dbReference type="OrthoDB" id="9781789at2"/>
<dbReference type="UniPathway" id="UPA00028">
    <property type="reaction ID" value="UER00003"/>
</dbReference>
<dbReference type="Proteomes" id="UP000008291">
    <property type="component" value="Chromosome"/>
</dbReference>
<dbReference type="GO" id="GO:0005737">
    <property type="term" value="C:cytoplasm"/>
    <property type="evidence" value="ECO:0007669"/>
    <property type="project" value="UniProtKB-SubCell"/>
</dbReference>
<dbReference type="GO" id="GO:0003864">
    <property type="term" value="F:3-methyl-2-oxobutanoate hydroxymethyltransferase activity"/>
    <property type="evidence" value="ECO:0007669"/>
    <property type="project" value="UniProtKB-UniRule"/>
</dbReference>
<dbReference type="GO" id="GO:0000287">
    <property type="term" value="F:magnesium ion binding"/>
    <property type="evidence" value="ECO:0007669"/>
    <property type="project" value="TreeGrafter"/>
</dbReference>
<dbReference type="GO" id="GO:0015940">
    <property type="term" value="P:pantothenate biosynthetic process"/>
    <property type="evidence" value="ECO:0007669"/>
    <property type="project" value="UniProtKB-UniRule"/>
</dbReference>
<dbReference type="CDD" id="cd06557">
    <property type="entry name" value="KPHMT-like"/>
    <property type="match status" value="1"/>
</dbReference>
<dbReference type="FunFam" id="3.20.20.60:FF:000003">
    <property type="entry name" value="3-methyl-2-oxobutanoate hydroxymethyltransferase"/>
    <property type="match status" value="1"/>
</dbReference>
<dbReference type="Gene3D" id="3.20.20.60">
    <property type="entry name" value="Phosphoenolpyruvate-binding domains"/>
    <property type="match status" value="1"/>
</dbReference>
<dbReference type="HAMAP" id="MF_00156">
    <property type="entry name" value="PanB"/>
    <property type="match status" value="1"/>
</dbReference>
<dbReference type="InterPro" id="IPR003700">
    <property type="entry name" value="Pantoate_hydroxy_MeTrfase"/>
</dbReference>
<dbReference type="InterPro" id="IPR015813">
    <property type="entry name" value="Pyrv/PenolPyrv_kinase-like_dom"/>
</dbReference>
<dbReference type="InterPro" id="IPR040442">
    <property type="entry name" value="Pyrv_kinase-like_dom_sf"/>
</dbReference>
<dbReference type="NCBIfam" id="TIGR00222">
    <property type="entry name" value="panB"/>
    <property type="match status" value="1"/>
</dbReference>
<dbReference type="NCBIfam" id="NF001452">
    <property type="entry name" value="PRK00311.1"/>
    <property type="match status" value="1"/>
</dbReference>
<dbReference type="PANTHER" id="PTHR20881">
    <property type="entry name" value="3-METHYL-2-OXOBUTANOATE HYDROXYMETHYLTRANSFERASE"/>
    <property type="match status" value="1"/>
</dbReference>
<dbReference type="PANTHER" id="PTHR20881:SF0">
    <property type="entry name" value="3-METHYL-2-OXOBUTANOATE HYDROXYMETHYLTRANSFERASE"/>
    <property type="match status" value="1"/>
</dbReference>
<dbReference type="Pfam" id="PF02548">
    <property type="entry name" value="Pantoate_transf"/>
    <property type="match status" value="1"/>
</dbReference>
<dbReference type="PIRSF" id="PIRSF000388">
    <property type="entry name" value="Pantoate_hydroxy_MeTrfase"/>
    <property type="match status" value="1"/>
</dbReference>
<dbReference type="SUPFAM" id="SSF51621">
    <property type="entry name" value="Phosphoenolpyruvate/pyruvate domain"/>
    <property type="match status" value="1"/>
</dbReference>
<evidence type="ECO:0000255" key="1">
    <source>
        <dbReference type="HAMAP-Rule" id="MF_00156"/>
    </source>
</evidence>